<comment type="function">
    <text evidence="1">Associates with the EF-Tu.GDP complex and induces the exchange of GDP to GTP. It remains bound to the aminoacyl-tRNA.EF-Tu.GTP complex up to the GTP hydrolysis stage on the ribosome.</text>
</comment>
<comment type="subcellular location">
    <subcellularLocation>
        <location evidence="1">Cytoplasm</location>
    </subcellularLocation>
</comment>
<comment type="similarity">
    <text evidence="1">Belongs to the EF-Ts family.</text>
</comment>
<sequence length="276" mass="31464">MKISVKLIKELRIKTGSGYLECKRALQKSNGNIINAINYLRIVGTDIAQRKVLRKTKFGRIFSYCSKNLGVLLELTSETDFVSKNEEFKNFGEKIVNFSGNNKIFDLTEINEIFNSKKINFISRVRENIEINKIKYITGNIIESYQHLGKIGVIISGKMLSPNTHLNTTKCFKNIAMHVAAAAPLYLSELDIPNNVLQKETDIQKSIAKKTGKSSKILQAIIKGRLKKFISEITLINQNFIINPKITIHDYLKENQVWINNFIRLQVGENIDNLNT</sequence>
<protein>
    <recommendedName>
        <fullName evidence="1">Elongation factor Ts</fullName>
        <shortName evidence="1">EF-Ts</shortName>
    </recommendedName>
</protein>
<accession>Q057T0</accession>
<gene>
    <name evidence="1" type="primary">tsf</name>
    <name type="ordered locus">BCc_143</name>
</gene>
<evidence type="ECO:0000255" key="1">
    <source>
        <dbReference type="HAMAP-Rule" id="MF_00050"/>
    </source>
</evidence>
<feature type="chain" id="PRO_1000006060" description="Elongation factor Ts">
    <location>
        <begin position="1"/>
        <end position="276"/>
    </location>
</feature>
<feature type="region of interest" description="Involved in Mg(2+) ion dislocation from EF-Tu" evidence="1">
    <location>
        <begin position="79"/>
        <end position="82"/>
    </location>
</feature>
<organism>
    <name type="scientific">Buchnera aphidicola subsp. Cinara cedri (strain Cc)</name>
    <dbReference type="NCBI Taxonomy" id="372461"/>
    <lineage>
        <taxon>Bacteria</taxon>
        <taxon>Pseudomonadati</taxon>
        <taxon>Pseudomonadota</taxon>
        <taxon>Gammaproteobacteria</taxon>
        <taxon>Enterobacterales</taxon>
        <taxon>Erwiniaceae</taxon>
        <taxon>Buchnera</taxon>
    </lineage>
</organism>
<reference key="1">
    <citation type="journal article" date="2006" name="Science">
        <title>A small microbial genome: the end of a long symbiotic relationship?</title>
        <authorList>
            <person name="Perez-Brocal V."/>
            <person name="Gil R."/>
            <person name="Ramos S."/>
            <person name="Lamelas A."/>
            <person name="Postigo M."/>
            <person name="Michelena J.M."/>
            <person name="Silva F.J."/>
            <person name="Moya A."/>
            <person name="Latorre A."/>
        </authorList>
    </citation>
    <scope>NUCLEOTIDE SEQUENCE [LARGE SCALE GENOMIC DNA]</scope>
    <source>
        <strain>Cc</strain>
    </source>
</reference>
<name>EFTS_BUCCC</name>
<dbReference type="EMBL" id="CP000263">
    <property type="protein sequence ID" value="ABJ90619.1"/>
    <property type="molecule type" value="Genomic_DNA"/>
</dbReference>
<dbReference type="RefSeq" id="WP_011672538.1">
    <property type="nucleotide sequence ID" value="NC_008513.1"/>
</dbReference>
<dbReference type="SMR" id="Q057T0"/>
<dbReference type="STRING" id="372461.BCc_143"/>
<dbReference type="KEGG" id="bcc:BCc_143"/>
<dbReference type="eggNOG" id="COG0264">
    <property type="taxonomic scope" value="Bacteria"/>
</dbReference>
<dbReference type="HOGENOM" id="CLU_047155_0_2_6"/>
<dbReference type="OrthoDB" id="9808348at2"/>
<dbReference type="Proteomes" id="UP000000669">
    <property type="component" value="Chromosome"/>
</dbReference>
<dbReference type="GO" id="GO:0005737">
    <property type="term" value="C:cytoplasm"/>
    <property type="evidence" value="ECO:0007669"/>
    <property type="project" value="UniProtKB-SubCell"/>
</dbReference>
<dbReference type="GO" id="GO:0003746">
    <property type="term" value="F:translation elongation factor activity"/>
    <property type="evidence" value="ECO:0007669"/>
    <property type="project" value="UniProtKB-UniRule"/>
</dbReference>
<dbReference type="CDD" id="cd14275">
    <property type="entry name" value="UBA_EF-Ts"/>
    <property type="match status" value="1"/>
</dbReference>
<dbReference type="FunFam" id="1.10.8.10:FF:000001">
    <property type="entry name" value="Elongation factor Ts"/>
    <property type="match status" value="1"/>
</dbReference>
<dbReference type="Gene3D" id="1.10.286.20">
    <property type="match status" value="1"/>
</dbReference>
<dbReference type="Gene3D" id="1.10.8.10">
    <property type="entry name" value="DNA helicase RuvA subunit, C-terminal domain"/>
    <property type="match status" value="1"/>
</dbReference>
<dbReference type="Gene3D" id="3.30.479.20">
    <property type="entry name" value="Elongation factor Ts, dimerisation domain"/>
    <property type="match status" value="2"/>
</dbReference>
<dbReference type="HAMAP" id="MF_00050">
    <property type="entry name" value="EF_Ts"/>
    <property type="match status" value="1"/>
</dbReference>
<dbReference type="InterPro" id="IPR036402">
    <property type="entry name" value="EF-Ts_dimer_sf"/>
</dbReference>
<dbReference type="InterPro" id="IPR001816">
    <property type="entry name" value="Transl_elong_EFTs/EF1B"/>
</dbReference>
<dbReference type="InterPro" id="IPR014039">
    <property type="entry name" value="Transl_elong_EFTs/EF1B_dimer"/>
</dbReference>
<dbReference type="InterPro" id="IPR018101">
    <property type="entry name" value="Transl_elong_Ts_CS"/>
</dbReference>
<dbReference type="InterPro" id="IPR009060">
    <property type="entry name" value="UBA-like_sf"/>
</dbReference>
<dbReference type="NCBIfam" id="TIGR00116">
    <property type="entry name" value="tsf"/>
    <property type="match status" value="1"/>
</dbReference>
<dbReference type="PANTHER" id="PTHR11741">
    <property type="entry name" value="ELONGATION FACTOR TS"/>
    <property type="match status" value="1"/>
</dbReference>
<dbReference type="PANTHER" id="PTHR11741:SF0">
    <property type="entry name" value="ELONGATION FACTOR TS, MITOCHONDRIAL"/>
    <property type="match status" value="1"/>
</dbReference>
<dbReference type="Pfam" id="PF00889">
    <property type="entry name" value="EF_TS"/>
    <property type="match status" value="1"/>
</dbReference>
<dbReference type="SUPFAM" id="SSF54713">
    <property type="entry name" value="Elongation factor Ts (EF-Ts), dimerisation domain"/>
    <property type="match status" value="1"/>
</dbReference>
<dbReference type="SUPFAM" id="SSF46934">
    <property type="entry name" value="UBA-like"/>
    <property type="match status" value="1"/>
</dbReference>
<dbReference type="PROSITE" id="PS01127">
    <property type="entry name" value="EF_TS_2"/>
    <property type="match status" value="1"/>
</dbReference>
<proteinExistence type="inferred from homology"/>
<keyword id="KW-0963">Cytoplasm</keyword>
<keyword id="KW-0251">Elongation factor</keyword>
<keyword id="KW-0648">Protein biosynthesis</keyword>
<keyword id="KW-1185">Reference proteome</keyword>